<name>BAMB_XANCP</name>
<comment type="function">
    <text evidence="1">Part of the outer membrane protein assembly complex, which is involved in assembly and insertion of beta-barrel proteins into the outer membrane.</text>
</comment>
<comment type="subunit">
    <text evidence="1">Part of the Bam complex.</text>
</comment>
<comment type="subcellular location">
    <subcellularLocation>
        <location evidence="1">Cell outer membrane</location>
        <topology evidence="1">Lipid-anchor</topology>
    </subcellularLocation>
</comment>
<comment type="similarity">
    <text evidence="1">Belongs to the BamB family.</text>
</comment>
<keyword id="KW-0998">Cell outer membrane</keyword>
<keyword id="KW-0449">Lipoprotein</keyword>
<keyword id="KW-0472">Membrane</keyword>
<keyword id="KW-0564">Palmitate</keyword>
<keyword id="KW-1185">Reference proteome</keyword>
<keyword id="KW-0732">Signal</keyword>
<protein>
    <recommendedName>
        <fullName evidence="1">Outer membrane protein assembly factor BamB</fullName>
    </recommendedName>
</protein>
<feature type="signal peptide" evidence="1">
    <location>
        <begin position="1"/>
        <end position="23"/>
    </location>
</feature>
<feature type="chain" id="PRO_0000417693" description="Outer membrane protein assembly factor BamB">
    <location>
        <begin position="24"/>
        <end position="406"/>
    </location>
</feature>
<feature type="lipid moiety-binding region" description="N-palmitoyl cysteine" evidence="1">
    <location>
        <position position="24"/>
    </location>
</feature>
<feature type="lipid moiety-binding region" description="S-diacylglycerol cysteine" evidence="1">
    <location>
        <position position="24"/>
    </location>
</feature>
<accession>Q8P980</accession>
<sequence length="406" mass="42722">MMKQVDMYKRVALIALMGMSLAGCSTVKGWFAGKDAAAKKAQEPAELVKFEPSVKVDKLWSTGVGKGEGHIGVRQRPAVADGKVYAAAITGGVQALDLQTGKRVWEYKPKKEERNDRKFKQRLSGGPGVGEGLVVIGTLSGDVIALNQADGTEKWRAKVPNEVIAAPAIAQSLVLVRSNDGRVSAFDAATGERRWFHAEEGPTLSVRGNAPIVTGPGVVFVGNDVGTLSALALQDGRPLWEQAIGVPEGRTELERMSDVDGAPVLDGTTLYATSFKNETLALEGPSGRPLWTRDHGGAGGPGVSSSVVVVADNAGSVWGLDKSSGAAMWSQAALARRSLTGVAIQGDYAVVGDYKGYLHWLKLSDGALAARARAGRDTLLAQPLVVDGILLVQNTDGDITAFRLAQ</sequence>
<gene>
    <name evidence="1" type="primary">bamB</name>
    <name type="ordered locus">XCC1986</name>
</gene>
<reference key="1">
    <citation type="journal article" date="2002" name="Nature">
        <title>Comparison of the genomes of two Xanthomonas pathogens with differing host specificities.</title>
        <authorList>
            <person name="da Silva A.C.R."/>
            <person name="Ferro J.A."/>
            <person name="Reinach F.C."/>
            <person name="Farah C.S."/>
            <person name="Furlan L.R."/>
            <person name="Quaggio R.B."/>
            <person name="Monteiro-Vitorello C.B."/>
            <person name="Van Sluys M.A."/>
            <person name="Almeida N.F. Jr."/>
            <person name="Alves L.M.C."/>
            <person name="do Amaral A.M."/>
            <person name="Bertolini M.C."/>
            <person name="Camargo L.E.A."/>
            <person name="Camarotte G."/>
            <person name="Cannavan F."/>
            <person name="Cardozo J."/>
            <person name="Chambergo F."/>
            <person name="Ciapina L.P."/>
            <person name="Cicarelli R.M.B."/>
            <person name="Coutinho L.L."/>
            <person name="Cursino-Santos J.R."/>
            <person name="El-Dorry H."/>
            <person name="Faria J.B."/>
            <person name="Ferreira A.J.S."/>
            <person name="Ferreira R.C.C."/>
            <person name="Ferro M.I.T."/>
            <person name="Formighieri E.F."/>
            <person name="Franco M.C."/>
            <person name="Greggio C.C."/>
            <person name="Gruber A."/>
            <person name="Katsuyama A.M."/>
            <person name="Kishi L.T."/>
            <person name="Leite R.P."/>
            <person name="Lemos E.G.M."/>
            <person name="Lemos M.V.F."/>
            <person name="Locali E.C."/>
            <person name="Machado M.A."/>
            <person name="Madeira A.M.B.N."/>
            <person name="Martinez-Rossi N.M."/>
            <person name="Martins E.C."/>
            <person name="Meidanis J."/>
            <person name="Menck C.F.M."/>
            <person name="Miyaki C.Y."/>
            <person name="Moon D.H."/>
            <person name="Moreira L.M."/>
            <person name="Novo M.T.M."/>
            <person name="Okura V.K."/>
            <person name="Oliveira M.C."/>
            <person name="Oliveira V.R."/>
            <person name="Pereira H.A."/>
            <person name="Rossi A."/>
            <person name="Sena J.A.D."/>
            <person name="Silva C."/>
            <person name="de Souza R.F."/>
            <person name="Spinola L.A.F."/>
            <person name="Takita M.A."/>
            <person name="Tamura R.E."/>
            <person name="Teixeira E.C."/>
            <person name="Tezza R.I.D."/>
            <person name="Trindade dos Santos M."/>
            <person name="Truffi D."/>
            <person name="Tsai S.M."/>
            <person name="White F.F."/>
            <person name="Setubal J.C."/>
            <person name="Kitajima J.P."/>
        </authorList>
    </citation>
    <scope>NUCLEOTIDE SEQUENCE [LARGE SCALE GENOMIC DNA]</scope>
    <source>
        <strain>ATCC 33913 / DSM 3586 / NCPPB 528 / LMG 568 / P 25</strain>
    </source>
</reference>
<proteinExistence type="inferred from homology"/>
<evidence type="ECO:0000255" key="1">
    <source>
        <dbReference type="HAMAP-Rule" id="MF_00923"/>
    </source>
</evidence>
<organism>
    <name type="scientific">Xanthomonas campestris pv. campestris (strain ATCC 33913 / DSM 3586 / NCPPB 528 / LMG 568 / P 25)</name>
    <dbReference type="NCBI Taxonomy" id="190485"/>
    <lineage>
        <taxon>Bacteria</taxon>
        <taxon>Pseudomonadati</taxon>
        <taxon>Pseudomonadota</taxon>
        <taxon>Gammaproteobacteria</taxon>
        <taxon>Lysobacterales</taxon>
        <taxon>Lysobacteraceae</taxon>
        <taxon>Xanthomonas</taxon>
    </lineage>
</organism>
<dbReference type="EMBL" id="AE008922">
    <property type="protein sequence ID" value="AAM41275.1"/>
    <property type="molecule type" value="Genomic_DNA"/>
</dbReference>
<dbReference type="RefSeq" id="NP_637351.1">
    <property type="nucleotide sequence ID" value="NC_003902.1"/>
</dbReference>
<dbReference type="SMR" id="Q8P980"/>
<dbReference type="STRING" id="190485.XCC1986"/>
<dbReference type="EnsemblBacteria" id="AAM41275">
    <property type="protein sequence ID" value="AAM41275"/>
    <property type="gene ID" value="XCC1986"/>
</dbReference>
<dbReference type="KEGG" id="xcc:XCC1986"/>
<dbReference type="PATRIC" id="fig|190485.4.peg.2121"/>
<dbReference type="eggNOG" id="COG1520">
    <property type="taxonomic scope" value="Bacteria"/>
</dbReference>
<dbReference type="HOGENOM" id="CLU_027480_0_1_6"/>
<dbReference type="OrthoDB" id="5173551at2"/>
<dbReference type="Proteomes" id="UP000001010">
    <property type="component" value="Chromosome"/>
</dbReference>
<dbReference type="GO" id="GO:0009279">
    <property type="term" value="C:cell outer membrane"/>
    <property type="evidence" value="ECO:0007669"/>
    <property type="project" value="UniProtKB-SubCell"/>
</dbReference>
<dbReference type="GO" id="GO:0043165">
    <property type="term" value="P:Gram-negative-bacterium-type cell outer membrane assembly"/>
    <property type="evidence" value="ECO:0007669"/>
    <property type="project" value="UniProtKB-UniRule"/>
</dbReference>
<dbReference type="GO" id="GO:0051205">
    <property type="term" value="P:protein insertion into membrane"/>
    <property type="evidence" value="ECO:0007669"/>
    <property type="project" value="UniProtKB-UniRule"/>
</dbReference>
<dbReference type="CDD" id="cd10276">
    <property type="entry name" value="BamB_YfgL"/>
    <property type="match status" value="1"/>
</dbReference>
<dbReference type="Gene3D" id="2.130.10.10">
    <property type="entry name" value="YVTN repeat-like/Quinoprotein amine dehydrogenase"/>
    <property type="match status" value="1"/>
</dbReference>
<dbReference type="HAMAP" id="MF_00923">
    <property type="entry name" value="OM_assembly_BamB"/>
    <property type="match status" value="1"/>
</dbReference>
<dbReference type="InterPro" id="IPR017687">
    <property type="entry name" value="BamB"/>
</dbReference>
<dbReference type="InterPro" id="IPR018391">
    <property type="entry name" value="PQQ_b-propeller_rpt"/>
</dbReference>
<dbReference type="InterPro" id="IPR002372">
    <property type="entry name" value="PQQ_rpt_dom"/>
</dbReference>
<dbReference type="InterPro" id="IPR011047">
    <property type="entry name" value="Quinoprotein_ADH-like_sf"/>
</dbReference>
<dbReference type="InterPro" id="IPR015943">
    <property type="entry name" value="WD40/YVTN_repeat-like_dom_sf"/>
</dbReference>
<dbReference type="NCBIfam" id="TIGR03300">
    <property type="entry name" value="assembly_YfgL"/>
    <property type="match status" value="1"/>
</dbReference>
<dbReference type="PANTHER" id="PTHR34512">
    <property type="entry name" value="CELL SURFACE PROTEIN"/>
    <property type="match status" value="1"/>
</dbReference>
<dbReference type="PANTHER" id="PTHR34512:SF30">
    <property type="entry name" value="OUTER MEMBRANE PROTEIN ASSEMBLY FACTOR BAMB"/>
    <property type="match status" value="1"/>
</dbReference>
<dbReference type="Pfam" id="PF13360">
    <property type="entry name" value="PQQ_2"/>
    <property type="match status" value="2"/>
</dbReference>
<dbReference type="SMART" id="SM00564">
    <property type="entry name" value="PQQ"/>
    <property type="match status" value="7"/>
</dbReference>
<dbReference type="SUPFAM" id="SSF50998">
    <property type="entry name" value="Quinoprotein alcohol dehydrogenase-like"/>
    <property type="match status" value="1"/>
</dbReference>
<dbReference type="PROSITE" id="PS51257">
    <property type="entry name" value="PROKAR_LIPOPROTEIN"/>
    <property type="match status" value="1"/>
</dbReference>